<protein>
    <recommendedName>
        <fullName>Sporulation kinase E</fullName>
        <ecNumber>2.7.13.3</ecNumber>
    </recommendedName>
    <alternativeName>
        <fullName>Sensor histidine kinase E</fullName>
    </alternativeName>
</protein>
<gene>
    <name type="primary">kinE</name>
    <name type="synonym">ykrQ</name>
    <name type="ordered locus">BSU13530</name>
</gene>
<comment type="function">
    <text evidence="3 4">Phosphorylates the sporulation-regulatory protein spo0A under biofilm growth conditions. Also able to weakly phosphorylate spo0F.</text>
</comment>
<comment type="catalytic activity">
    <reaction>
        <text>ATP + protein L-histidine = ADP + protein N-phospho-L-histidine.</text>
        <dbReference type="EC" id="2.7.13.3"/>
    </reaction>
</comment>
<comment type="induction">
    <text evidence="3">Expressed during growth and early stationary phase.</text>
</comment>
<evidence type="ECO:0000255" key="1">
    <source>
        <dbReference type="PROSITE-ProRule" id="PRU00107"/>
    </source>
</evidence>
<evidence type="ECO:0000255" key="2">
    <source>
        <dbReference type="PROSITE-ProRule" id="PRU00140"/>
    </source>
</evidence>
<evidence type="ECO:0000269" key="3">
    <source>
    </source>
</evidence>
<evidence type="ECO:0000269" key="4">
    <source>
    </source>
</evidence>
<feature type="chain" id="PRO_0000375264" description="Sporulation kinase E">
    <location>
        <begin position="1"/>
        <end position="738"/>
    </location>
</feature>
<feature type="domain" description="PAS 1" evidence="2">
    <location>
        <begin position="29"/>
        <end position="99"/>
    </location>
</feature>
<feature type="domain" description="PAS 2" evidence="2">
    <location>
        <begin position="150"/>
        <end position="220"/>
    </location>
</feature>
<feature type="domain" description="PAS 3" evidence="2">
    <location>
        <begin position="271"/>
        <end position="342"/>
    </location>
</feature>
<feature type="domain" description="PAS 4" evidence="2">
    <location>
        <begin position="391"/>
        <end position="462"/>
    </location>
</feature>
<feature type="domain" description="Histidine kinase" evidence="1">
    <location>
        <begin position="523"/>
        <end position="729"/>
    </location>
</feature>
<feature type="modified residue" description="Phosphohistidine; by autocatalysis" evidence="1">
    <location>
        <position position="526"/>
    </location>
</feature>
<dbReference type="EC" id="2.7.13.3"/>
<dbReference type="EMBL" id="AL009126">
    <property type="protein sequence ID" value="CAB13226.1"/>
    <property type="molecule type" value="Genomic_DNA"/>
</dbReference>
<dbReference type="PIR" id="B69863">
    <property type="entry name" value="B69863"/>
</dbReference>
<dbReference type="RefSeq" id="NP_389236.1">
    <property type="nucleotide sequence ID" value="NC_000964.3"/>
</dbReference>
<dbReference type="RefSeq" id="WP_003232504.1">
    <property type="nucleotide sequence ID" value="NZ_OZ025638.1"/>
</dbReference>
<dbReference type="SMR" id="O31661"/>
<dbReference type="FunCoup" id="O31661">
    <property type="interactions" value="278"/>
</dbReference>
<dbReference type="IntAct" id="O31661">
    <property type="interactions" value="1"/>
</dbReference>
<dbReference type="STRING" id="224308.BSU13530"/>
<dbReference type="PaxDb" id="224308-BSU13530"/>
<dbReference type="EnsemblBacteria" id="CAB13226">
    <property type="protein sequence ID" value="CAB13226"/>
    <property type="gene ID" value="BSU_13530"/>
</dbReference>
<dbReference type="GeneID" id="939349"/>
<dbReference type="KEGG" id="bsu:BSU13530"/>
<dbReference type="PATRIC" id="fig|224308.179.peg.1469"/>
<dbReference type="eggNOG" id="COG5002">
    <property type="taxonomic scope" value="Bacteria"/>
</dbReference>
<dbReference type="InParanoid" id="O31661"/>
<dbReference type="OrthoDB" id="9815750at2"/>
<dbReference type="PhylomeDB" id="O31661"/>
<dbReference type="BioCyc" id="BSUB:BSU13530-MONOMER"/>
<dbReference type="Proteomes" id="UP000001570">
    <property type="component" value="Chromosome"/>
</dbReference>
<dbReference type="GO" id="GO:0005524">
    <property type="term" value="F:ATP binding"/>
    <property type="evidence" value="ECO:0007669"/>
    <property type="project" value="UniProtKB-KW"/>
</dbReference>
<dbReference type="GO" id="GO:0000155">
    <property type="term" value="F:phosphorelay sensor kinase activity"/>
    <property type="evidence" value="ECO:0007669"/>
    <property type="project" value="InterPro"/>
</dbReference>
<dbReference type="GO" id="GO:0030435">
    <property type="term" value="P:sporulation resulting in formation of a cellular spore"/>
    <property type="evidence" value="ECO:0007669"/>
    <property type="project" value="UniProtKB-KW"/>
</dbReference>
<dbReference type="CDD" id="cd00082">
    <property type="entry name" value="HisKA"/>
    <property type="match status" value="1"/>
</dbReference>
<dbReference type="CDD" id="cd00130">
    <property type="entry name" value="PAS"/>
    <property type="match status" value="4"/>
</dbReference>
<dbReference type="FunFam" id="1.10.287.130:FF:000040">
    <property type="entry name" value="PAS domain-containing sensor histidine kinase"/>
    <property type="match status" value="1"/>
</dbReference>
<dbReference type="Gene3D" id="1.10.287.130">
    <property type="match status" value="1"/>
</dbReference>
<dbReference type="Gene3D" id="3.30.565.10">
    <property type="entry name" value="Histidine kinase-like ATPase, C-terminal domain"/>
    <property type="match status" value="1"/>
</dbReference>
<dbReference type="Gene3D" id="3.30.450.20">
    <property type="entry name" value="PAS domain"/>
    <property type="match status" value="4"/>
</dbReference>
<dbReference type="InterPro" id="IPR036890">
    <property type="entry name" value="HATPase_C_sf"/>
</dbReference>
<dbReference type="InterPro" id="IPR005467">
    <property type="entry name" value="His_kinase_dom"/>
</dbReference>
<dbReference type="InterPro" id="IPR003661">
    <property type="entry name" value="HisK_dim/P_dom"/>
</dbReference>
<dbReference type="InterPro" id="IPR036097">
    <property type="entry name" value="HisK_dim/P_sf"/>
</dbReference>
<dbReference type="InterPro" id="IPR000014">
    <property type="entry name" value="PAS"/>
</dbReference>
<dbReference type="InterPro" id="IPR035965">
    <property type="entry name" value="PAS-like_dom_sf"/>
</dbReference>
<dbReference type="InterPro" id="IPR013656">
    <property type="entry name" value="PAS_4"/>
</dbReference>
<dbReference type="InterPro" id="IPR004358">
    <property type="entry name" value="Sig_transdc_His_kin-like_C"/>
</dbReference>
<dbReference type="NCBIfam" id="TIGR00229">
    <property type="entry name" value="sensory_box"/>
    <property type="match status" value="4"/>
</dbReference>
<dbReference type="PANTHER" id="PTHR43065">
    <property type="entry name" value="SENSOR HISTIDINE KINASE"/>
    <property type="match status" value="1"/>
</dbReference>
<dbReference type="PANTHER" id="PTHR43065:SF34">
    <property type="entry name" value="SPORULATION KINASE A"/>
    <property type="match status" value="1"/>
</dbReference>
<dbReference type="Pfam" id="PF02518">
    <property type="entry name" value="HATPase_c"/>
    <property type="match status" value="1"/>
</dbReference>
<dbReference type="Pfam" id="PF00512">
    <property type="entry name" value="HisKA"/>
    <property type="match status" value="1"/>
</dbReference>
<dbReference type="Pfam" id="PF08448">
    <property type="entry name" value="PAS_4"/>
    <property type="match status" value="1"/>
</dbReference>
<dbReference type="Pfam" id="PF13188">
    <property type="entry name" value="PAS_8"/>
    <property type="match status" value="2"/>
</dbReference>
<dbReference type="Pfam" id="PF13426">
    <property type="entry name" value="PAS_9"/>
    <property type="match status" value="1"/>
</dbReference>
<dbReference type="PRINTS" id="PR00344">
    <property type="entry name" value="BCTRLSENSOR"/>
</dbReference>
<dbReference type="SMART" id="SM00387">
    <property type="entry name" value="HATPase_c"/>
    <property type="match status" value="1"/>
</dbReference>
<dbReference type="SMART" id="SM00388">
    <property type="entry name" value="HisKA"/>
    <property type="match status" value="1"/>
</dbReference>
<dbReference type="SMART" id="SM00091">
    <property type="entry name" value="PAS"/>
    <property type="match status" value="4"/>
</dbReference>
<dbReference type="SUPFAM" id="SSF55874">
    <property type="entry name" value="ATPase domain of HSP90 chaperone/DNA topoisomerase II/histidine kinase"/>
    <property type="match status" value="1"/>
</dbReference>
<dbReference type="SUPFAM" id="SSF47384">
    <property type="entry name" value="Homodimeric domain of signal transducing histidine kinase"/>
    <property type="match status" value="1"/>
</dbReference>
<dbReference type="SUPFAM" id="SSF55785">
    <property type="entry name" value="PYP-like sensor domain (PAS domain)"/>
    <property type="match status" value="4"/>
</dbReference>
<dbReference type="PROSITE" id="PS50109">
    <property type="entry name" value="HIS_KIN"/>
    <property type="match status" value="1"/>
</dbReference>
<dbReference type="PROSITE" id="PS50112">
    <property type="entry name" value="PAS"/>
    <property type="match status" value="3"/>
</dbReference>
<sequence length="738" mass="85513">METLGVQTNSELREELNRLKEENARLKKELNQHQVIVNNTLDAIFICDNEMRIVQANEATERMLQVDSEDLKKRSVLDFLFSIPKDELNLSVKKFFKKGFLWKEVPIRLDCGATKYIEFLAKRGIGEDFFFVVMRDISSKKILEREFSMNEQLFKDLFDRAVDGIVLFDKDGGFIDANLSFCKSFEINHNELSHLSLYEFIDSGSRKDFDNIWKALNRKGKAKGELPVKLRSGVQKLFEFTITSNIISGFYMSIMRDITEKRSMELQLFKSEERFREIFENAMDAIIIWSNDGRIVKANQSACKIFELPMNLLLKRKLCDFLVDSQQKYSITKRKYAKYGEIREELLFQMGNGQFKELEFTSKRTILENQHLTILRNVSDRKRMEKELRESELKFRKVFNGSMDGNVLFDNQYRIIDANPLASHILGLSHEEIKQHSLLDIISAYEIENLASPARQINFDEMDNEIPFLLSSGDNRKLEFSFKRNIIQNMNLAIFKDVTERKELEERLRKSDTLHVVGELAAGIAHEIRNPMTALKGFIQLLKGSVEGDYALYFNVITSELKRIESIITEFLILAKPQAIMYEEKHVTQIMRDTIDLLNAQANLSNVQMQLDLIDDIPPIYCEPNQLKQVFINILKNAIEVMPDGGNIFVTIKALDQDHVLISLKDEGIGMTEDKLKRLGEPFYTTKERGTGLGLMVSYKIIEEHQGEIMVESEEGKGTVFHITLPVRQNAEERRNDE</sequence>
<accession>O31661</accession>
<organism>
    <name type="scientific">Bacillus subtilis (strain 168)</name>
    <dbReference type="NCBI Taxonomy" id="224308"/>
    <lineage>
        <taxon>Bacteria</taxon>
        <taxon>Bacillati</taxon>
        <taxon>Bacillota</taxon>
        <taxon>Bacilli</taxon>
        <taxon>Bacillales</taxon>
        <taxon>Bacillaceae</taxon>
        <taxon>Bacillus</taxon>
    </lineage>
</organism>
<proteinExistence type="evidence at protein level"/>
<reference key="1">
    <citation type="journal article" date="1997" name="Nature">
        <title>The complete genome sequence of the Gram-positive bacterium Bacillus subtilis.</title>
        <authorList>
            <person name="Kunst F."/>
            <person name="Ogasawara N."/>
            <person name="Moszer I."/>
            <person name="Albertini A.M."/>
            <person name="Alloni G."/>
            <person name="Azevedo V."/>
            <person name="Bertero M.G."/>
            <person name="Bessieres P."/>
            <person name="Bolotin A."/>
            <person name="Borchert S."/>
            <person name="Borriss R."/>
            <person name="Boursier L."/>
            <person name="Brans A."/>
            <person name="Braun M."/>
            <person name="Brignell S.C."/>
            <person name="Bron S."/>
            <person name="Brouillet S."/>
            <person name="Bruschi C.V."/>
            <person name="Caldwell B."/>
            <person name="Capuano V."/>
            <person name="Carter N.M."/>
            <person name="Choi S.-K."/>
            <person name="Codani J.-J."/>
            <person name="Connerton I.F."/>
            <person name="Cummings N.J."/>
            <person name="Daniel R.A."/>
            <person name="Denizot F."/>
            <person name="Devine K.M."/>
            <person name="Duesterhoeft A."/>
            <person name="Ehrlich S.D."/>
            <person name="Emmerson P.T."/>
            <person name="Entian K.-D."/>
            <person name="Errington J."/>
            <person name="Fabret C."/>
            <person name="Ferrari E."/>
            <person name="Foulger D."/>
            <person name="Fritz C."/>
            <person name="Fujita M."/>
            <person name="Fujita Y."/>
            <person name="Fuma S."/>
            <person name="Galizzi A."/>
            <person name="Galleron N."/>
            <person name="Ghim S.-Y."/>
            <person name="Glaser P."/>
            <person name="Goffeau A."/>
            <person name="Golightly E.J."/>
            <person name="Grandi G."/>
            <person name="Guiseppi G."/>
            <person name="Guy B.J."/>
            <person name="Haga K."/>
            <person name="Haiech J."/>
            <person name="Harwood C.R."/>
            <person name="Henaut A."/>
            <person name="Hilbert H."/>
            <person name="Holsappel S."/>
            <person name="Hosono S."/>
            <person name="Hullo M.-F."/>
            <person name="Itaya M."/>
            <person name="Jones L.-M."/>
            <person name="Joris B."/>
            <person name="Karamata D."/>
            <person name="Kasahara Y."/>
            <person name="Klaerr-Blanchard M."/>
            <person name="Klein C."/>
            <person name="Kobayashi Y."/>
            <person name="Koetter P."/>
            <person name="Koningstein G."/>
            <person name="Krogh S."/>
            <person name="Kumano M."/>
            <person name="Kurita K."/>
            <person name="Lapidus A."/>
            <person name="Lardinois S."/>
            <person name="Lauber J."/>
            <person name="Lazarevic V."/>
            <person name="Lee S.-M."/>
            <person name="Levine A."/>
            <person name="Liu H."/>
            <person name="Masuda S."/>
            <person name="Mauel C."/>
            <person name="Medigue C."/>
            <person name="Medina N."/>
            <person name="Mellado R.P."/>
            <person name="Mizuno M."/>
            <person name="Moestl D."/>
            <person name="Nakai S."/>
            <person name="Noback M."/>
            <person name="Noone D."/>
            <person name="O'Reilly M."/>
            <person name="Ogawa K."/>
            <person name="Ogiwara A."/>
            <person name="Oudega B."/>
            <person name="Park S.-H."/>
            <person name="Parro V."/>
            <person name="Pohl T.M."/>
            <person name="Portetelle D."/>
            <person name="Porwollik S."/>
            <person name="Prescott A.M."/>
            <person name="Presecan E."/>
            <person name="Pujic P."/>
            <person name="Purnelle B."/>
            <person name="Rapoport G."/>
            <person name="Rey M."/>
            <person name="Reynolds S."/>
            <person name="Rieger M."/>
            <person name="Rivolta C."/>
            <person name="Rocha E."/>
            <person name="Roche B."/>
            <person name="Rose M."/>
            <person name="Sadaie Y."/>
            <person name="Sato T."/>
            <person name="Scanlan E."/>
            <person name="Schleich S."/>
            <person name="Schroeter R."/>
            <person name="Scoffone F."/>
            <person name="Sekiguchi J."/>
            <person name="Sekowska A."/>
            <person name="Seror S.J."/>
            <person name="Serror P."/>
            <person name="Shin B.-S."/>
            <person name="Soldo B."/>
            <person name="Sorokin A."/>
            <person name="Tacconi E."/>
            <person name="Takagi T."/>
            <person name="Takahashi H."/>
            <person name="Takemaru K."/>
            <person name="Takeuchi M."/>
            <person name="Tamakoshi A."/>
            <person name="Tanaka T."/>
            <person name="Terpstra P."/>
            <person name="Tognoni A."/>
            <person name="Tosato V."/>
            <person name="Uchiyama S."/>
            <person name="Vandenbol M."/>
            <person name="Vannier F."/>
            <person name="Vassarotti A."/>
            <person name="Viari A."/>
            <person name="Wambutt R."/>
            <person name="Wedler E."/>
            <person name="Wedler H."/>
            <person name="Weitzenegger T."/>
            <person name="Winters P."/>
            <person name="Wipat A."/>
            <person name="Yamamoto H."/>
            <person name="Yamane K."/>
            <person name="Yasumoto K."/>
            <person name="Yata K."/>
            <person name="Yoshida K."/>
            <person name="Yoshikawa H.-F."/>
            <person name="Zumstein E."/>
            <person name="Yoshikawa H."/>
            <person name="Danchin A."/>
        </authorList>
    </citation>
    <scope>NUCLEOTIDE SEQUENCE [LARGE SCALE GENOMIC DNA]</scope>
    <source>
        <strain>168</strain>
    </source>
</reference>
<reference key="2">
    <citation type="journal article" date="2000" name="Mol. Microbiol.">
        <title>Multiple histidine kinases regulate entry into stationary phase and sporulation in Bacillus subtilis.</title>
        <authorList>
            <person name="Jiang M."/>
            <person name="Shao W."/>
            <person name="Perego M."/>
            <person name="Hoch J.A."/>
        </authorList>
    </citation>
    <scope>FUNCTION IN PHOSPHORYLATING SPO0F</scope>
    <scope>INDUCTION</scope>
    <source>
        <strain>168 / JH642</strain>
    </source>
</reference>
<reference key="3">
    <citation type="journal article" date="2001" name="Mol. Microbiol.">
        <title>The sporulation transcription factor Spo0A is required for biofilm development in Bacillus subtilis.</title>
        <authorList>
            <person name="Hamon M.A."/>
            <person name="Lazazzera B.A."/>
        </authorList>
    </citation>
    <scope>FUNCTION IN PHOSPHORYLATING SPO0A</scope>
    <source>
        <strain>168 / JH642</strain>
    </source>
</reference>
<name>KINE_BACSU</name>
<keyword id="KW-0067">ATP-binding</keyword>
<keyword id="KW-0418">Kinase</keyword>
<keyword id="KW-0547">Nucleotide-binding</keyword>
<keyword id="KW-0597">Phosphoprotein</keyword>
<keyword id="KW-1185">Reference proteome</keyword>
<keyword id="KW-0677">Repeat</keyword>
<keyword id="KW-0749">Sporulation</keyword>
<keyword id="KW-0808">Transferase</keyword>
<keyword id="KW-0902">Two-component regulatory system</keyword>